<keyword id="KW-0963">Cytoplasm</keyword>
<keyword id="KW-0479">Metal-binding</keyword>
<keyword id="KW-0520">NAD</keyword>
<keyword id="KW-0560">Oxidoreductase</keyword>
<keyword id="KW-1185">Reference proteome</keyword>
<keyword id="KW-0862">Zinc</keyword>
<sequence length="341" mass="37170">MKALSKLKPEEGIWMVDAPKPEMGHNDLLIKIRKTAICGTDVHIYNWDEWSQKTIPVPMIAGHEYVGEVVDVGQEVRGFSIGDRVSGEGHITCGHCRNCRAGRTHLCRNTSGVGVNRDGAFAEYLVLPAFNAFKIPADIPDDLAAIFDPFGNAVHTALSFDLVGEDVLITGAGPIGIMAAAVCKHVGARHVVITDVNEYRLDLARKMGATRAVNVATENLKDVMKELGMTEGFDVGLEMSGVPSAFHAMLDTMNHGGKIAMLGIPGGEMAIDWSKIIFKGLIIKGIYGREMFETWYKMASLIQSGLDLSPIITHHFSIDDFQKGFDAMRSGQSGKVILNWD</sequence>
<evidence type="ECO:0000255" key="1">
    <source>
        <dbReference type="HAMAP-Rule" id="MF_00627"/>
    </source>
</evidence>
<accession>Q07W50</accession>
<gene>
    <name evidence="1" type="primary">tdh</name>
    <name type="ordered locus">Sfri_3939</name>
</gene>
<protein>
    <recommendedName>
        <fullName evidence="1">L-threonine 3-dehydrogenase</fullName>
        <shortName evidence="1">TDH</shortName>
        <ecNumber evidence="1">1.1.1.103</ecNumber>
    </recommendedName>
</protein>
<organism>
    <name type="scientific">Shewanella frigidimarina (strain NCIMB 400)</name>
    <dbReference type="NCBI Taxonomy" id="318167"/>
    <lineage>
        <taxon>Bacteria</taxon>
        <taxon>Pseudomonadati</taxon>
        <taxon>Pseudomonadota</taxon>
        <taxon>Gammaproteobacteria</taxon>
        <taxon>Alteromonadales</taxon>
        <taxon>Shewanellaceae</taxon>
        <taxon>Shewanella</taxon>
    </lineage>
</organism>
<feature type="chain" id="PRO_1000051654" description="L-threonine 3-dehydrogenase">
    <location>
        <begin position="1"/>
        <end position="341"/>
    </location>
</feature>
<feature type="active site" description="Charge relay system" evidence="1">
    <location>
        <position position="40"/>
    </location>
</feature>
<feature type="active site" description="Charge relay system" evidence="1">
    <location>
        <position position="43"/>
    </location>
</feature>
<feature type="binding site" evidence="1">
    <location>
        <position position="38"/>
    </location>
    <ligand>
        <name>Zn(2+)</name>
        <dbReference type="ChEBI" id="CHEBI:29105"/>
        <label>1</label>
        <note>catalytic</note>
    </ligand>
</feature>
<feature type="binding site" evidence="1">
    <location>
        <position position="63"/>
    </location>
    <ligand>
        <name>Zn(2+)</name>
        <dbReference type="ChEBI" id="CHEBI:29105"/>
        <label>1</label>
        <note>catalytic</note>
    </ligand>
</feature>
<feature type="binding site" evidence="1">
    <location>
        <position position="64"/>
    </location>
    <ligand>
        <name>Zn(2+)</name>
        <dbReference type="ChEBI" id="CHEBI:29105"/>
        <label>1</label>
        <note>catalytic</note>
    </ligand>
</feature>
<feature type="binding site" evidence="1">
    <location>
        <position position="93"/>
    </location>
    <ligand>
        <name>Zn(2+)</name>
        <dbReference type="ChEBI" id="CHEBI:29105"/>
        <label>2</label>
    </ligand>
</feature>
<feature type="binding site" evidence="1">
    <location>
        <position position="96"/>
    </location>
    <ligand>
        <name>Zn(2+)</name>
        <dbReference type="ChEBI" id="CHEBI:29105"/>
        <label>2</label>
    </ligand>
</feature>
<feature type="binding site" evidence="1">
    <location>
        <position position="99"/>
    </location>
    <ligand>
        <name>Zn(2+)</name>
        <dbReference type="ChEBI" id="CHEBI:29105"/>
        <label>2</label>
    </ligand>
</feature>
<feature type="binding site" evidence="1">
    <location>
        <position position="107"/>
    </location>
    <ligand>
        <name>Zn(2+)</name>
        <dbReference type="ChEBI" id="CHEBI:29105"/>
        <label>2</label>
    </ligand>
</feature>
<feature type="binding site" evidence="1">
    <location>
        <position position="175"/>
    </location>
    <ligand>
        <name>NAD(+)</name>
        <dbReference type="ChEBI" id="CHEBI:57540"/>
    </ligand>
</feature>
<feature type="binding site" evidence="1">
    <location>
        <position position="195"/>
    </location>
    <ligand>
        <name>NAD(+)</name>
        <dbReference type="ChEBI" id="CHEBI:57540"/>
    </ligand>
</feature>
<feature type="binding site" evidence="1">
    <location>
        <position position="200"/>
    </location>
    <ligand>
        <name>NAD(+)</name>
        <dbReference type="ChEBI" id="CHEBI:57540"/>
    </ligand>
</feature>
<feature type="binding site" evidence="1">
    <location>
        <begin position="262"/>
        <end position="264"/>
    </location>
    <ligand>
        <name>NAD(+)</name>
        <dbReference type="ChEBI" id="CHEBI:57540"/>
    </ligand>
</feature>
<feature type="binding site" evidence="1">
    <location>
        <begin position="286"/>
        <end position="287"/>
    </location>
    <ligand>
        <name>NAD(+)</name>
        <dbReference type="ChEBI" id="CHEBI:57540"/>
    </ligand>
</feature>
<feature type="site" description="Important for catalytic activity for the proton relay mechanism but does not participate directly in the coordination of zinc atom" evidence="1">
    <location>
        <position position="148"/>
    </location>
</feature>
<comment type="function">
    <text evidence="1">Catalyzes the NAD(+)-dependent oxidation of L-threonine to 2-amino-3-ketobutyrate.</text>
</comment>
<comment type="catalytic activity">
    <reaction evidence="1">
        <text>L-threonine + NAD(+) = (2S)-2-amino-3-oxobutanoate + NADH + H(+)</text>
        <dbReference type="Rhea" id="RHEA:13161"/>
        <dbReference type="ChEBI" id="CHEBI:15378"/>
        <dbReference type="ChEBI" id="CHEBI:57540"/>
        <dbReference type="ChEBI" id="CHEBI:57926"/>
        <dbReference type="ChEBI" id="CHEBI:57945"/>
        <dbReference type="ChEBI" id="CHEBI:78948"/>
        <dbReference type="EC" id="1.1.1.103"/>
    </reaction>
</comment>
<comment type="cofactor">
    <cofactor evidence="1">
        <name>Zn(2+)</name>
        <dbReference type="ChEBI" id="CHEBI:29105"/>
    </cofactor>
    <text evidence="1">Binds 2 Zn(2+) ions per subunit.</text>
</comment>
<comment type="pathway">
    <text evidence="1">Amino-acid degradation; L-threonine degradation via oxydo-reductase pathway; glycine from L-threonine: step 1/2.</text>
</comment>
<comment type="subunit">
    <text evidence="1">Homotetramer.</text>
</comment>
<comment type="subcellular location">
    <subcellularLocation>
        <location evidence="1">Cytoplasm</location>
    </subcellularLocation>
</comment>
<comment type="similarity">
    <text evidence="1">Belongs to the zinc-containing alcohol dehydrogenase family.</text>
</comment>
<name>TDH_SHEFN</name>
<reference key="1">
    <citation type="submission" date="2006-08" db="EMBL/GenBank/DDBJ databases">
        <title>Complete sequence of Shewanella frigidimarina NCIMB 400.</title>
        <authorList>
            <consortium name="US DOE Joint Genome Institute"/>
            <person name="Copeland A."/>
            <person name="Lucas S."/>
            <person name="Lapidus A."/>
            <person name="Barry K."/>
            <person name="Detter J.C."/>
            <person name="Glavina del Rio T."/>
            <person name="Hammon N."/>
            <person name="Israni S."/>
            <person name="Dalin E."/>
            <person name="Tice H."/>
            <person name="Pitluck S."/>
            <person name="Fredrickson J.K."/>
            <person name="Kolker E."/>
            <person name="McCuel L.A."/>
            <person name="DiChristina T."/>
            <person name="Nealson K.H."/>
            <person name="Newman D."/>
            <person name="Tiedje J.M."/>
            <person name="Zhou J."/>
            <person name="Romine M.F."/>
            <person name="Culley D.E."/>
            <person name="Serres M."/>
            <person name="Chertkov O."/>
            <person name="Brettin T."/>
            <person name="Bruce D."/>
            <person name="Han C."/>
            <person name="Tapia R."/>
            <person name="Gilna P."/>
            <person name="Schmutz J."/>
            <person name="Larimer F."/>
            <person name="Land M."/>
            <person name="Hauser L."/>
            <person name="Kyrpides N."/>
            <person name="Mikhailova N."/>
            <person name="Richardson P."/>
        </authorList>
    </citation>
    <scope>NUCLEOTIDE SEQUENCE [LARGE SCALE GENOMIC DNA]</scope>
    <source>
        <strain>NCIMB 400</strain>
    </source>
</reference>
<proteinExistence type="inferred from homology"/>
<dbReference type="EC" id="1.1.1.103" evidence="1"/>
<dbReference type="EMBL" id="CP000447">
    <property type="protein sequence ID" value="ABI73764.1"/>
    <property type="molecule type" value="Genomic_DNA"/>
</dbReference>
<dbReference type="RefSeq" id="WP_011639348.1">
    <property type="nucleotide sequence ID" value="NC_008345.1"/>
</dbReference>
<dbReference type="SMR" id="Q07W50"/>
<dbReference type="STRING" id="318167.Sfri_3939"/>
<dbReference type="KEGG" id="sfr:Sfri_3939"/>
<dbReference type="eggNOG" id="COG1063">
    <property type="taxonomic scope" value="Bacteria"/>
</dbReference>
<dbReference type="HOGENOM" id="CLU_026673_11_0_6"/>
<dbReference type="OrthoDB" id="9773078at2"/>
<dbReference type="UniPathway" id="UPA00046">
    <property type="reaction ID" value="UER00505"/>
</dbReference>
<dbReference type="Proteomes" id="UP000000684">
    <property type="component" value="Chromosome"/>
</dbReference>
<dbReference type="GO" id="GO:0005737">
    <property type="term" value="C:cytoplasm"/>
    <property type="evidence" value="ECO:0007669"/>
    <property type="project" value="UniProtKB-SubCell"/>
</dbReference>
<dbReference type="GO" id="GO:0008743">
    <property type="term" value="F:L-threonine 3-dehydrogenase activity"/>
    <property type="evidence" value="ECO:0007669"/>
    <property type="project" value="UniProtKB-UniRule"/>
</dbReference>
<dbReference type="GO" id="GO:0008270">
    <property type="term" value="F:zinc ion binding"/>
    <property type="evidence" value="ECO:0007669"/>
    <property type="project" value="UniProtKB-UniRule"/>
</dbReference>
<dbReference type="GO" id="GO:0019518">
    <property type="term" value="P:L-threonine catabolic process to glycine"/>
    <property type="evidence" value="ECO:0007669"/>
    <property type="project" value="UniProtKB-UniPathway"/>
</dbReference>
<dbReference type="Gene3D" id="3.90.180.10">
    <property type="entry name" value="Medium-chain alcohol dehydrogenases, catalytic domain"/>
    <property type="match status" value="1"/>
</dbReference>
<dbReference type="Gene3D" id="3.40.50.720">
    <property type="entry name" value="NAD(P)-binding Rossmann-like Domain"/>
    <property type="match status" value="1"/>
</dbReference>
<dbReference type="HAMAP" id="MF_00627">
    <property type="entry name" value="Thr_dehydrog"/>
    <property type="match status" value="1"/>
</dbReference>
<dbReference type="InterPro" id="IPR013149">
    <property type="entry name" value="ADH-like_C"/>
</dbReference>
<dbReference type="InterPro" id="IPR013154">
    <property type="entry name" value="ADH-like_N"/>
</dbReference>
<dbReference type="InterPro" id="IPR002328">
    <property type="entry name" value="ADH_Zn_CS"/>
</dbReference>
<dbReference type="InterPro" id="IPR011032">
    <property type="entry name" value="GroES-like_sf"/>
</dbReference>
<dbReference type="InterPro" id="IPR004627">
    <property type="entry name" value="L-Threonine_3-DHase"/>
</dbReference>
<dbReference type="InterPro" id="IPR036291">
    <property type="entry name" value="NAD(P)-bd_dom_sf"/>
</dbReference>
<dbReference type="InterPro" id="IPR020843">
    <property type="entry name" value="PKS_ER"/>
</dbReference>
<dbReference type="InterPro" id="IPR050129">
    <property type="entry name" value="Zn_alcohol_dh"/>
</dbReference>
<dbReference type="NCBIfam" id="NF003808">
    <property type="entry name" value="PRK05396.1"/>
    <property type="match status" value="1"/>
</dbReference>
<dbReference type="NCBIfam" id="TIGR00692">
    <property type="entry name" value="tdh"/>
    <property type="match status" value="1"/>
</dbReference>
<dbReference type="PANTHER" id="PTHR43401">
    <property type="entry name" value="L-THREONINE 3-DEHYDROGENASE"/>
    <property type="match status" value="1"/>
</dbReference>
<dbReference type="PANTHER" id="PTHR43401:SF2">
    <property type="entry name" value="L-THREONINE 3-DEHYDROGENASE"/>
    <property type="match status" value="1"/>
</dbReference>
<dbReference type="Pfam" id="PF08240">
    <property type="entry name" value="ADH_N"/>
    <property type="match status" value="1"/>
</dbReference>
<dbReference type="Pfam" id="PF00107">
    <property type="entry name" value="ADH_zinc_N"/>
    <property type="match status" value="1"/>
</dbReference>
<dbReference type="SMART" id="SM00829">
    <property type="entry name" value="PKS_ER"/>
    <property type="match status" value="1"/>
</dbReference>
<dbReference type="SUPFAM" id="SSF50129">
    <property type="entry name" value="GroES-like"/>
    <property type="match status" value="1"/>
</dbReference>
<dbReference type="SUPFAM" id="SSF51735">
    <property type="entry name" value="NAD(P)-binding Rossmann-fold domains"/>
    <property type="match status" value="1"/>
</dbReference>
<dbReference type="PROSITE" id="PS00059">
    <property type="entry name" value="ADH_ZINC"/>
    <property type="match status" value="1"/>
</dbReference>